<dbReference type="EC" id="2.3.1.225" evidence="6 7 8"/>
<dbReference type="EMBL" id="AK298683">
    <property type="protein sequence ID" value="BAG60846.1"/>
    <property type="molecule type" value="mRNA"/>
</dbReference>
<dbReference type="EMBL" id="AL034380">
    <property type="status" value="NOT_ANNOTATED_CDS"/>
    <property type="molecule type" value="Genomic_DNA"/>
</dbReference>
<dbReference type="EMBL" id="CH471059">
    <property type="protein sequence ID" value="EAX07788.1"/>
    <property type="molecule type" value="Genomic_DNA"/>
</dbReference>
<dbReference type="EMBL" id="BC066776">
    <property type="protein sequence ID" value="AAH66776.1"/>
    <property type="molecule type" value="mRNA"/>
</dbReference>
<dbReference type="EMBL" id="AL512765">
    <property type="protein sequence ID" value="CAC21682.1"/>
    <property type="molecule type" value="mRNA"/>
</dbReference>
<dbReference type="CCDS" id="CCDS30650.1">
    <molecule id="Q9NUE0-1"/>
</dbReference>
<dbReference type="RefSeq" id="NP_115659.1">
    <molecule id="Q9NUE0-1"/>
    <property type="nucleotide sequence ID" value="NM_032283.3"/>
</dbReference>
<dbReference type="SMR" id="Q9NUE0"/>
<dbReference type="BioGRID" id="123972">
    <property type="interactions" value="75"/>
</dbReference>
<dbReference type="FunCoup" id="Q9NUE0">
    <property type="interactions" value="1161"/>
</dbReference>
<dbReference type="IntAct" id="Q9NUE0">
    <property type="interactions" value="38"/>
</dbReference>
<dbReference type="MINT" id="Q9NUE0"/>
<dbReference type="STRING" id="9606.ENSP00000363257"/>
<dbReference type="GlyGen" id="Q9NUE0">
    <property type="glycosylation" value="1 site"/>
</dbReference>
<dbReference type="iPTMnet" id="Q9NUE0"/>
<dbReference type="PhosphoSitePlus" id="Q9NUE0"/>
<dbReference type="SwissPalm" id="Q9NUE0"/>
<dbReference type="BioMuta" id="ZDHHC18"/>
<dbReference type="DMDM" id="34395910"/>
<dbReference type="jPOST" id="Q9NUE0"/>
<dbReference type="MassIVE" id="Q9NUE0"/>
<dbReference type="PaxDb" id="9606-ENSP00000363257"/>
<dbReference type="PeptideAtlas" id="Q9NUE0"/>
<dbReference type="ProteomicsDB" id="4855"/>
<dbReference type="ProteomicsDB" id="82667">
    <molecule id="Q9NUE0-1"/>
</dbReference>
<dbReference type="Pumba" id="Q9NUE0"/>
<dbReference type="Antibodypedia" id="46760">
    <property type="antibodies" value="98 antibodies from 25 providers"/>
</dbReference>
<dbReference type="DNASU" id="84243"/>
<dbReference type="Ensembl" id="ENST00000374141.6">
    <molecule id="Q9NUE0-2"/>
    <property type="protein sequence ID" value="ENSP00000363256.2"/>
    <property type="gene ID" value="ENSG00000204160.12"/>
</dbReference>
<dbReference type="Ensembl" id="ENST00000374142.9">
    <molecule id="Q9NUE0-1"/>
    <property type="protein sequence ID" value="ENSP00000363257.3"/>
    <property type="gene ID" value="ENSG00000204160.12"/>
</dbReference>
<dbReference type="GeneID" id="84243"/>
<dbReference type="KEGG" id="hsa:84243"/>
<dbReference type="MANE-Select" id="ENST00000374142.9">
    <property type="protein sequence ID" value="ENSP00000363257.3"/>
    <property type="RefSeq nucleotide sequence ID" value="NM_032283.3"/>
    <property type="RefSeq protein sequence ID" value="NP_115659.1"/>
</dbReference>
<dbReference type="UCSC" id="uc001bnb.4">
    <molecule id="Q9NUE0-1"/>
    <property type="organism name" value="human"/>
</dbReference>
<dbReference type="AGR" id="HGNC:20712"/>
<dbReference type="CTD" id="84243"/>
<dbReference type="DisGeNET" id="84243"/>
<dbReference type="GeneCards" id="ZDHHC18"/>
<dbReference type="HGNC" id="HGNC:20712">
    <property type="gene designation" value="ZDHHC18"/>
</dbReference>
<dbReference type="HPA" id="ENSG00000204160">
    <property type="expression patterns" value="Tissue enhanced (bone)"/>
</dbReference>
<dbReference type="MIM" id="620963">
    <property type="type" value="gene"/>
</dbReference>
<dbReference type="neXtProt" id="NX_Q9NUE0"/>
<dbReference type="OpenTargets" id="ENSG00000204160"/>
<dbReference type="PharmGKB" id="PA134968241"/>
<dbReference type="VEuPathDB" id="HostDB:ENSG00000204160"/>
<dbReference type="eggNOG" id="KOG1311">
    <property type="taxonomic scope" value="Eukaryota"/>
</dbReference>
<dbReference type="GeneTree" id="ENSGT00940000156585"/>
<dbReference type="HOGENOM" id="CLU_018741_3_1_1"/>
<dbReference type="InParanoid" id="Q9NUE0"/>
<dbReference type="OMA" id="NDAHMCT"/>
<dbReference type="OrthoDB" id="4096362at2759"/>
<dbReference type="PAN-GO" id="Q9NUE0">
    <property type="GO annotations" value="5 GO annotations based on evolutionary models"/>
</dbReference>
<dbReference type="PhylomeDB" id="Q9NUE0"/>
<dbReference type="TreeFam" id="TF312923"/>
<dbReference type="PathwayCommons" id="Q9NUE0"/>
<dbReference type="SignaLink" id="Q9NUE0"/>
<dbReference type="BioGRID-ORCS" id="84243">
    <property type="hits" value="35 hits in 1162 CRISPR screens"/>
</dbReference>
<dbReference type="ChiTaRS" id="ZDHHC18">
    <property type="organism name" value="human"/>
</dbReference>
<dbReference type="GenomeRNAi" id="84243"/>
<dbReference type="Pharos" id="Q9NUE0">
    <property type="development level" value="Tdark"/>
</dbReference>
<dbReference type="PRO" id="PR:Q9NUE0"/>
<dbReference type="Proteomes" id="UP000005640">
    <property type="component" value="Chromosome 1"/>
</dbReference>
<dbReference type="RNAct" id="Q9NUE0">
    <property type="molecule type" value="protein"/>
</dbReference>
<dbReference type="Bgee" id="ENSG00000204160">
    <property type="expression patterns" value="Expressed in blood and 160 other cell types or tissues"/>
</dbReference>
<dbReference type="ExpressionAtlas" id="Q9NUE0">
    <property type="expression patterns" value="baseline and differential"/>
</dbReference>
<dbReference type="GO" id="GO:0005829">
    <property type="term" value="C:cytosol"/>
    <property type="evidence" value="ECO:0000314"/>
    <property type="project" value="HPA"/>
</dbReference>
<dbReference type="GO" id="GO:0005783">
    <property type="term" value="C:endoplasmic reticulum"/>
    <property type="evidence" value="ECO:0000318"/>
    <property type="project" value="GO_Central"/>
</dbReference>
<dbReference type="GO" id="GO:0005794">
    <property type="term" value="C:Golgi apparatus"/>
    <property type="evidence" value="ECO:0000314"/>
    <property type="project" value="HPA"/>
</dbReference>
<dbReference type="GO" id="GO:0000139">
    <property type="term" value="C:Golgi membrane"/>
    <property type="evidence" value="ECO:0007669"/>
    <property type="project" value="UniProtKB-SubCell"/>
</dbReference>
<dbReference type="GO" id="GO:0016409">
    <property type="term" value="F:palmitoyltransferase activity"/>
    <property type="evidence" value="ECO:0000314"/>
    <property type="project" value="UniProtKB"/>
</dbReference>
<dbReference type="GO" id="GO:0019706">
    <property type="term" value="F:protein-cysteine S-palmitoyltransferase activity"/>
    <property type="evidence" value="ECO:0000314"/>
    <property type="project" value="UniProtKB"/>
</dbReference>
<dbReference type="GO" id="GO:0045087">
    <property type="term" value="P:innate immune response"/>
    <property type="evidence" value="ECO:0007669"/>
    <property type="project" value="UniProtKB-KW"/>
</dbReference>
<dbReference type="GO" id="GO:0160049">
    <property type="term" value="P:negative regulation of cGAS/STING signaling pathway"/>
    <property type="evidence" value="ECO:0000314"/>
    <property type="project" value="UniProt"/>
</dbReference>
<dbReference type="GO" id="GO:0045824">
    <property type="term" value="P:negative regulation of innate immune response"/>
    <property type="evidence" value="ECO:0000314"/>
    <property type="project" value="UniProtKB"/>
</dbReference>
<dbReference type="GO" id="GO:0018230">
    <property type="term" value="P:peptidyl-L-cysteine S-palmitoylation"/>
    <property type="evidence" value="ECO:0000315"/>
    <property type="project" value="UniProtKB"/>
</dbReference>
<dbReference type="GO" id="GO:0018345">
    <property type="term" value="P:protein palmitoylation"/>
    <property type="evidence" value="ECO:0000314"/>
    <property type="project" value="UniProtKB"/>
</dbReference>
<dbReference type="GO" id="GO:0006612">
    <property type="term" value="P:protein targeting to membrane"/>
    <property type="evidence" value="ECO:0000318"/>
    <property type="project" value="GO_Central"/>
</dbReference>
<dbReference type="InterPro" id="IPR001594">
    <property type="entry name" value="Palmitoyltrfase_DHHC"/>
</dbReference>
<dbReference type="InterPro" id="IPR039859">
    <property type="entry name" value="PFA4/ZDH16/20/ERF2-like"/>
</dbReference>
<dbReference type="PANTHER" id="PTHR22883:SF257">
    <property type="entry name" value="PALMITOYLTRANSFERASE ZDHHC18"/>
    <property type="match status" value="1"/>
</dbReference>
<dbReference type="PANTHER" id="PTHR22883">
    <property type="entry name" value="ZINC FINGER DHHC DOMAIN CONTAINING PROTEIN"/>
    <property type="match status" value="1"/>
</dbReference>
<dbReference type="Pfam" id="PF01529">
    <property type="entry name" value="DHHC"/>
    <property type="match status" value="1"/>
</dbReference>
<dbReference type="PROSITE" id="PS50216">
    <property type="entry name" value="DHHC"/>
    <property type="match status" value="1"/>
</dbReference>
<organism>
    <name type="scientific">Homo sapiens</name>
    <name type="common">Human</name>
    <dbReference type="NCBI Taxonomy" id="9606"/>
    <lineage>
        <taxon>Eukaryota</taxon>
        <taxon>Metazoa</taxon>
        <taxon>Chordata</taxon>
        <taxon>Craniata</taxon>
        <taxon>Vertebrata</taxon>
        <taxon>Euteleostomi</taxon>
        <taxon>Mammalia</taxon>
        <taxon>Eutheria</taxon>
        <taxon>Euarchontoglires</taxon>
        <taxon>Primates</taxon>
        <taxon>Haplorrhini</taxon>
        <taxon>Catarrhini</taxon>
        <taxon>Hominidae</taxon>
        <taxon>Homo</taxon>
    </lineage>
</organism>
<feature type="chain" id="PRO_0000212902" description="Palmitoyltransferase ZDHHC18">
    <location>
        <begin position="1"/>
        <end position="388"/>
    </location>
</feature>
<feature type="topological domain" description="Cytoplasmic" evidence="12">
    <location>
        <begin position="1"/>
        <end position="90"/>
    </location>
</feature>
<feature type="transmembrane region" description="Helical" evidence="2">
    <location>
        <begin position="91"/>
        <end position="111"/>
    </location>
</feature>
<feature type="topological domain" description="Lumenal" evidence="12">
    <location>
        <begin position="112"/>
        <end position="119"/>
    </location>
</feature>
<feature type="transmembrane region" description="Helical" evidence="2">
    <location>
        <begin position="120"/>
        <end position="140"/>
    </location>
</feature>
<feature type="topological domain" description="Cytoplasmic" evidence="12">
    <location>
        <begin position="141"/>
        <end position="235"/>
    </location>
</feature>
<feature type="transmembrane region" description="Helical" evidence="2">
    <location>
        <begin position="236"/>
        <end position="256"/>
    </location>
</feature>
<feature type="topological domain" description="Lumenal" evidence="12">
    <location>
        <begin position="257"/>
        <end position="277"/>
    </location>
</feature>
<feature type="transmembrane region" description="Helical" evidence="2">
    <location>
        <begin position="278"/>
        <end position="298"/>
    </location>
</feature>
<feature type="topological domain" description="Cytoplasmic" evidence="12">
    <location>
        <begin position="299"/>
        <end position="388"/>
    </location>
</feature>
<feature type="domain" description="DHHC" evidence="3">
    <location>
        <begin position="192"/>
        <end position="242"/>
    </location>
</feature>
<feature type="region of interest" description="Disordered" evidence="4">
    <location>
        <begin position="1"/>
        <end position="67"/>
    </location>
</feature>
<feature type="region of interest" description="Disordered" evidence="4">
    <location>
        <begin position="364"/>
        <end position="388"/>
    </location>
</feature>
<feature type="compositionally biased region" description="Low complexity" evidence="4">
    <location>
        <begin position="10"/>
        <end position="27"/>
    </location>
</feature>
<feature type="compositionally biased region" description="Pro residues" evidence="4">
    <location>
        <begin position="28"/>
        <end position="46"/>
    </location>
</feature>
<feature type="compositionally biased region" description="Basic and acidic residues" evidence="4">
    <location>
        <begin position="369"/>
        <end position="379"/>
    </location>
</feature>
<feature type="active site" description="S-palmitoyl cysteine intermediate" evidence="3">
    <location>
        <position position="222"/>
    </location>
</feature>
<feature type="modified residue" description="Phosphoserine" evidence="16">
    <location>
        <position position="19"/>
    </location>
</feature>
<feature type="splice variant" id="VSP_056000" description="In isoform 2." evidence="9">
    <location>
        <begin position="1"/>
        <end position="135"/>
    </location>
</feature>
<sequence>MKDCEYQQISPGAAPLPASPGARRPGPAASPTPGPGPAPPAAPAPPRWSSSGSGSGSGSGSLGRRPRRKWEVFPGRNRFYCGGRLMLAGHGGVFALTLLLILTTTGLFFVFDCPYLARKLTLAIPIIAAILFFFVMSCLLQTSFTDPGILPRATVCEAAALEKQIDNTGSSTYRPPPRTREVLINGQMVKLKYCFTCKMFRPPRTSHCSVCDNCVERFDHHCPWVGNCVGRRNYRFFYAFILSLSFLTAFIFACVVTHLTLRAQGSNFLSTLKETPASVLELVICFFSIWSILGLSGFHTYLVASNLTTNEDIKGSWSSKRGGEASVNPYSHKSIITNCCAVLCGPLPPSLIDRRGFVQSDTVLPSPIRSDEPACRAKPDASMVGGHP</sequence>
<comment type="function">
    <text evidence="6 7 8">Palmitoyltransferase that catalyzes the addition of palmitate onto various protein substrates, such as CGAS, HRAS and LCK (PubMed:23034182, PubMed:27481942, PubMed:35438208). Acts as a negative regulator of the cGAS-STING pathway be mediating palmitoylation and inactivation of CGAS (PubMed:35438208). May also have a palmitoyltransferase activity toward the beta-2 adrenergic receptor/ADRB2 and therefore regulate G protein-coupled receptor signaling (PubMed:27481942).</text>
</comment>
<comment type="catalytic activity">
    <reaction evidence="6 7 8">
        <text>L-cysteinyl-[protein] + hexadecanoyl-CoA = S-hexadecanoyl-L-cysteinyl-[protein] + CoA</text>
        <dbReference type="Rhea" id="RHEA:36683"/>
        <dbReference type="Rhea" id="RHEA-COMP:10131"/>
        <dbReference type="Rhea" id="RHEA-COMP:11032"/>
        <dbReference type="ChEBI" id="CHEBI:29950"/>
        <dbReference type="ChEBI" id="CHEBI:57287"/>
        <dbReference type="ChEBI" id="CHEBI:57379"/>
        <dbReference type="ChEBI" id="CHEBI:74151"/>
        <dbReference type="EC" id="2.3.1.225"/>
    </reaction>
    <physiologicalReaction direction="left-to-right" evidence="8 14">
        <dbReference type="Rhea" id="RHEA:36684"/>
    </physiologicalReaction>
</comment>
<comment type="subcellular location">
    <subcellularLocation>
        <location evidence="8 13">Golgi apparatus membrane</location>
        <topology evidence="2">Multi-pass membrane protein</topology>
    </subcellularLocation>
</comment>
<comment type="alternative products">
    <event type="alternative splicing"/>
    <isoform>
        <id>Q9NUE0-1</id>
        <name>1</name>
        <sequence type="displayed"/>
    </isoform>
    <isoform>
        <id>Q9NUE0-2</id>
        <name>2</name>
        <sequence type="described" ref="VSP_056000"/>
    </isoform>
</comment>
<comment type="tissue specificity">
    <text evidence="5">Widely expressed.</text>
</comment>
<comment type="domain">
    <text evidence="1">The DHHC domain is required for palmitoyltransferase activity.</text>
</comment>
<comment type="similarity">
    <text evidence="12">Belongs to the DHHC palmitoyltransferase family. ERF2/ZDHHC9 subfamily.</text>
</comment>
<evidence type="ECO:0000250" key="1">
    <source>
        <dbReference type="UniProtKB" id="Q8IUH5"/>
    </source>
</evidence>
<evidence type="ECO:0000255" key="2"/>
<evidence type="ECO:0000255" key="3">
    <source>
        <dbReference type="PROSITE-ProRule" id="PRU00067"/>
    </source>
</evidence>
<evidence type="ECO:0000256" key="4">
    <source>
        <dbReference type="SAM" id="MobiDB-lite"/>
    </source>
</evidence>
<evidence type="ECO:0000269" key="5">
    <source>
    </source>
</evidence>
<evidence type="ECO:0000269" key="6">
    <source>
    </source>
</evidence>
<evidence type="ECO:0000269" key="7">
    <source>
    </source>
</evidence>
<evidence type="ECO:0000269" key="8">
    <source>
    </source>
</evidence>
<evidence type="ECO:0000303" key="9">
    <source>
    </source>
</evidence>
<evidence type="ECO:0000303" key="10">
    <source>
    </source>
</evidence>
<evidence type="ECO:0000303" key="11">
    <source>
    </source>
</evidence>
<evidence type="ECO:0000305" key="12"/>
<evidence type="ECO:0000305" key="13">
    <source>
    </source>
</evidence>
<evidence type="ECO:0000305" key="14">
    <source>
    </source>
</evidence>
<evidence type="ECO:0000312" key="15">
    <source>
        <dbReference type="HGNC" id="HGNC:20712"/>
    </source>
</evidence>
<evidence type="ECO:0007744" key="16">
    <source>
    </source>
</evidence>
<protein>
    <recommendedName>
        <fullName evidence="12">Palmitoyltransferase ZDHHC18</fullName>
        <ecNumber evidence="6 7 8">2.3.1.225</ecNumber>
    </recommendedName>
    <alternativeName>
        <fullName evidence="10">DHHC domain-containing cysteine-rich protein 18</fullName>
        <shortName evidence="10">DHHC-18</shortName>
    </alternativeName>
    <alternativeName>
        <fullName evidence="15">Zinc finger DHHC domain-containing protein 18</fullName>
    </alternativeName>
</protein>
<gene>
    <name evidence="11 15" type="primary">ZDHHC18</name>
</gene>
<name>ZDH18_HUMAN</name>
<proteinExistence type="evidence at protein level"/>
<keyword id="KW-0012">Acyltransferase</keyword>
<keyword id="KW-0025">Alternative splicing</keyword>
<keyword id="KW-0333">Golgi apparatus</keyword>
<keyword id="KW-0391">Immunity</keyword>
<keyword id="KW-0399">Innate immunity</keyword>
<keyword id="KW-0449">Lipoprotein</keyword>
<keyword id="KW-0472">Membrane</keyword>
<keyword id="KW-0564">Palmitate</keyword>
<keyword id="KW-0597">Phosphoprotein</keyword>
<keyword id="KW-1267">Proteomics identification</keyword>
<keyword id="KW-1185">Reference proteome</keyword>
<keyword id="KW-0808">Transferase</keyword>
<keyword id="KW-0812">Transmembrane</keyword>
<keyword id="KW-1133">Transmembrane helix</keyword>
<accession>Q9NUE0</accession>
<accession>A6NHY9</accession>
<accession>B4DQ84</accession>
<accession>Q5JYH0</accession>
<accession>Q9H020</accession>
<reference key="1">
    <citation type="journal article" date="2004" name="Nat. Genet.">
        <title>Complete sequencing and characterization of 21,243 full-length human cDNAs.</title>
        <authorList>
            <person name="Ota T."/>
            <person name="Suzuki Y."/>
            <person name="Nishikawa T."/>
            <person name="Otsuki T."/>
            <person name="Sugiyama T."/>
            <person name="Irie R."/>
            <person name="Wakamatsu A."/>
            <person name="Hayashi K."/>
            <person name="Sato H."/>
            <person name="Nagai K."/>
            <person name="Kimura K."/>
            <person name="Makita H."/>
            <person name="Sekine M."/>
            <person name="Obayashi M."/>
            <person name="Nishi T."/>
            <person name="Shibahara T."/>
            <person name="Tanaka T."/>
            <person name="Ishii S."/>
            <person name="Yamamoto J."/>
            <person name="Saito K."/>
            <person name="Kawai Y."/>
            <person name="Isono Y."/>
            <person name="Nakamura Y."/>
            <person name="Nagahari K."/>
            <person name="Murakami K."/>
            <person name="Yasuda T."/>
            <person name="Iwayanagi T."/>
            <person name="Wagatsuma M."/>
            <person name="Shiratori A."/>
            <person name="Sudo H."/>
            <person name="Hosoiri T."/>
            <person name="Kaku Y."/>
            <person name="Kodaira H."/>
            <person name="Kondo H."/>
            <person name="Sugawara M."/>
            <person name="Takahashi M."/>
            <person name="Kanda K."/>
            <person name="Yokoi T."/>
            <person name="Furuya T."/>
            <person name="Kikkawa E."/>
            <person name="Omura Y."/>
            <person name="Abe K."/>
            <person name="Kamihara K."/>
            <person name="Katsuta N."/>
            <person name="Sato K."/>
            <person name="Tanikawa M."/>
            <person name="Yamazaki M."/>
            <person name="Ninomiya K."/>
            <person name="Ishibashi T."/>
            <person name="Yamashita H."/>
            <person name="Murakawa K."/>
            <person name="Fujimori K."/>
            <person name="Tanai H."/>
            <person name="Kimata M."/>
            <person name="Watanabe M."/>
            <person name="Hiraoka S."/>
            <person name="Chiba Y."/>
            <person name="Ishida S."/>
            <person name="Ono Y."/>
            <person name="Takiguchi S."/>
            <person name="Watanabe S."/>
            <person name="Yosida M."/>
            <person name="Hotuta T."/>
            <person name="Kusano J."/>
            <person name="Kanehori K."/>
            <person name="Takahashi-Fujii A."/>
            <person name="Hara H."/>
            <person name="Tanase T.-O."/>
            <person name="Nomura Y."/>
            <person name="Togiya S."/>
            <person name="Komai F."/>
            <person name="Hara R."/>
            <person name="Takeuchi K."/>
            <person name="Arita M."/>
            <person name="Imose N."/>
            <person name="Musashino K."/>
            <person name="Yuuki H."/>
            <person name="Oshima A."/>
            <person name="Sasaki N."/>
            <person name="Aotsuka S."/>
            <person name="Yoshikawa Y."/>
            <person name="Matsunawa H."/>
            <person name="Ichihara T."/>
            <person name="Shiohata N."/>
            <person name="Sano S."/>
            <person name="Moriya S."/>
            <person name="Momiyama H."/>
            <person name="Satoh N."/>
            <person name="Takami S."/>
            <person name="Terashima Y."/>
            <person name="Suzuki O."/>
            <person name="Nakagawa S."/>
            <person name="Senoh A."/>
            <person name="Mizoguchi H."/>
            <person name="Goto Y."/>
            <person name="Shimizu F."/>
            <person name="Wakebe H."/>
            <person name="Hishigaki H."/>
            <person name="Watanabe T."/>
            <person name="Sugiyama A."/>
            <person name="Takemoto M."/>
            <person name="Kawakami B."/>
            <person name="Yamazaki M."/>
            <person name="Watanabe K."/>
            <person name="Kumagai A."/>
            <person name="Itakura S."/>
            <person name="Fukuzumi Y."/>
            <person name="Fujimori Y."/>
            <person name="Komiyama M."/>
            <person name="Tashiro H."/>
            <person name="Tanigami A."/>
            <person name="Fujiwara T."/>
            <person name="Ono T."/>
            <person name="Yamada K."/>
            <person name="Fujii Y."/>
            <person name="Ozaki K."/>
            <person name="Hirao M."/>
            <person name="Ohmori Y."/>
            <person name="Kawabata A."/>
            <person name="Hikiji T."/>
            <person name="Kobatake N."/>
            <person name="Inagaki H."/>
            <person name="Ikema Y."/>
            <person name="Okamoto S."/>
            <person name="Okitani R."/>
            <person name="Kawakami T."/>
            <person name="Noguchi S."/>
            <person name="Itoh T."/>
            <person name="Shigeta K."/>
            <person name="Senba T."/>
            <person name="Matsumura K."/>
            <person name="Nakajima Y."/>
            <person name="Mizuno T."/>
            <person name="Morinaga M."/>
            <person name="Sasaki M."/>
            <person name="Togashi T."/>
            <person name="Oyama M."/>
            <person name="Hata H."/>
            <person name="Watanabe M."/>
            <person name="Komatsu T."/>
            <person name="Mizushima-Sugano J."/>
            <person name="Satoh T."/>
            <person name="Shirai Y."/>
            <person name="Takahashi Y."/>
            <person name="Nakagawa K."/>
            <person name="Okumura K."/>
            <person name="Nagase T."/>
            <person name="Nomura N."/>
            <person name="Kikuchi H."/>
            <person name="Masuho Y."/>
            <person name="Yamashita R."/>
            <person name="Nakai K."/>
            <person name="Yada T."/>
            <person name="Nakamura Y."/>
            <person name="Ohara O."/>
            <person name="Isogai T."/>
            <person name="Sugano S."/>
        </authorList>
    </citation>
    <scope>NUCLEOTIDE SEQUENCE [LARGE SCALE MRNA] (ISOFORM 2)</scope>
</reference>
<reference key="2">
    <citation type="journal article" date="2006" name="Nature">
        <title>The DNA sequence and biological annotation of human chromosome 1.</title>
        <authorList>
            <person name="Gregory S.G."/>
            <person name="Barlow K.F."/>
            <person name="McLay K.E."/>
            <person name="Kaul R."/>
            <person name="Swarbreck D."/>
            <person name="Dunham A."/>
            <person name="Scott C.E."/>
            <person name="Howe K.L."/>
            <person name="Woodfine K."/>
            <person name="Spencer C.C.A."/>
            <person name="Jones M.C."/>
            <person name="Gillson C."/>
            <person name="Searle S."/>
            <person name="Zhou Y."/>
            <person name="Kokocinski F."/>
            <person name="McDonald L."/>
            <person name="Evans R."/>
            <person name="Phillips K."/>
            <person name="Atkinson A."/>
            <person name="Cooper R."/>
            <person name="Jones C."/>
            <person name="Hall R.E."/>
            <person name="Andrews T.D."/>
            <person name="Lloyd C."/>
            <person name="Ainscough R."/>
            <person name="Almeida J.P."/>
            <person name="Ambrose K.D."/>
            <person name="Anderson F."/>
            <person name="Andrew R.W."/>
            <person name="Ashwell R.I.S."/>
            <person name="Aubin K."/>
            <person name="Babbage A.K."/>
            <person name="Bagguley C.L."/>
            <person name="Bailey J."/>
            <person name="Beasley H."/>
            <person name="Bethel G."/>
            <person name="Bird C.P."/>
            <person name="Bray-Allen S."/>
            <person name="Brown J.Y."/>
            <person name="Brown A.J."/>
            <person name="Buckley D."/>
            <person name="Burton J."/>
            <person name="Bye J."/>
            <person name="Carder C."/>
            <person name="Chapman J.C."/>
            <person name="Clark S.Y."/>
            <person name="Clarke G."/>
            <person name="Clee C."/>
            <person name="Cobley V."/>
            <person name="Collier R.E."/>
            <person name="Corby N."/>
            <person name="Coville G.J."/>
            <person name="Davies J."/>
            <person name="Deadman R."/>
            <person name="Dunn M."/>
            <person name="Earthrowl M."/>
            <person name="Ellington A.G."/>
            <person name="Errington H."/>
            <person name="Frankish A."/>
            <person name="Frankland J."/>
            <person name="French L."/>
            <person name="Garner P."/>
            <person name="Garnett J."/>
            <person name="Gay L."/>
            <person name="Ghori M.R.J."/>
            <person name="Gibson R."/>
            <person name="Gilby L.M."/>
            <person name="Gillett W."/>
            <person name="Glithero R.J."/>
            <person name="Grafham D.V."/>
            <person name="Griffiths C."/>
            <person name="Griffiths-Jones S."/>
            <person name="Grocock R."/>
            <person name="Hammond S."/>
            <person name="Harrison E.S.I."/>
            <person name="Hart E."/>
            <person name="Haugen E."/>
            <person name="Heath P.D."/>
            <person name="Holmes S."/>
            <person name="Holt K."/>
            <person name="Howden P.J."/>
            <person name="Hunt A.R."/>
            <person name="Hunt S.E."/>
            <person name="Hunter G."/>
            <person name="Isherwood J."/>
            <person name="James R."/>
            <person name="Johnson C."/>
            <person name="Johnson D."/>
            <person name="Joy A."/>
            <person name="Kay M."/>
            <person name="Kershaw J.K."/>
            <person name="Kibukawa M."/>
            <person name="Kimberley A.M."/>
            <person name="King A."/>
            <person name="Knights A.J."/>
            <person name="Lad H."/>
            <person name="Laird G."/>
            <person name="Lawlor S."/>
            <person name="Leongamornlert D.A."/>
            <person name="Lloyd D.M."/>
            <person name="Loveland J."/>
            <person name="Lovell J."/>
            <person name="Lush M.J."/>
            <person name="Lyne R."/>
            <person name="Martin S."/>
            <person name="Mashreghi-Mohammadi M."/>
            <person name="Matthews L."/>
            <person name="Matthews N.S.W."/>
            <person name="McLaren S."/>
            <person name="Milne S."/>
            <person name="Mistry S."/>
            <person name="Moore M.J.F."/>
            <person name="Nickerson T."/>
            <person name="O'Dell C.N."/>
            <person name="Oliver K."/>
            <person name="Palmeiri A."/>
            <person name="Palmer S.A."/>
            <person name="Parker A."/>
            <person name="Patel D."/>
            <person name="Pearce A.V."/>
            <person name="Peck A.I."/>
            <person name="Pelan S."/>
            <person name="Phelps K."/>
            <person name="Phillimore B.J."/>
            <person name="Plumb R."/>
            <person name="Rajan J."/>
            <person name="Raymond C."/>
            <person name="Rouse G."/>
            <person name="Saenphimmachak C."/>
            <person name="Sehra H.K."/>
            <person name="Sheridan E."/>
            <person name="Shownkeen R."/>
            <person name="Sims S."/>
            <person name="Skuce C.D."/>
            <person name="Smith M."/>
            <person name="Steward C."/>
            <person name="Subramanian S."/>
            <person name="Sycamore N."/>
            <person name="Tracey A."/>
            <person name="Tromans A."/>
            <person name="Van Helmond Z."/>
            <person name="Wall M."/>
            <person name="Wallis J.M."/>
            <person name="White S."/>
            <person name="Whitehead S.L."/>
            <person name="Wilkinson J.E."/>
            <person name="Willey D.L."/>
            <person name="Williams H."/>
            <person name="Wilming L."/>
            <person name="Wray P.W."/>
            <person name="Wu Z."/>
            <person name="Coulson A."/>
            <person name="Vaudin M."/>
            <person name="Sulston J.E."/>
            <person name="Durbin R.M."/>
            <person name="Hubbard T."/>
            <person name="Wooster R."/>
            <person name="Dunham I."/>
            <person name="Carter N.P."/>
            <person name="McVean G."/>
            <person name="Ross M.T."/>
            <person name="Harrow J."/>
            <person name="Olson M.V."/>
            <person name="Beck S."/>
            <person name="Rogers J."/>
            <person name="Bentley D.R."/>
        </authorList>
    </citation>
    <scope>NUCLEOTIDE SEQUENCE [LARGE SCALE GENOMIC DNA]</scope>
</reference>
<reference key="3">
    <citation type="submission" date="2005-09" db="EMBL/GenBank/DDBJ databases">
        <authorList>
            <person name="Mural R.J."/>
            <person name="Istrail S."/>
            <person name="Sutton G.G."/>
            <person name="Florea L."/>
            <person name="Halpern A.L."/>
            <person name="Mobarry C.M."/>
            <person name="Lippert R."/>
            <person name="Walenz B."/>
            <person name="Shatkay H."/>
            <person name="Dew I."/>
            <person name="Miller J.R."/>
            <person name="Flanigan M.J."/>
            <person name="Edwards N.J."/>
            <person name="Bolanos R."/>
            <person name="Fasulo D."/>
            <person name="Halldorsson B.V."/>
            <person name="Hannenhalli S."/>
            <person name="Turner R."/>
            <person name="Yooseph S."/>
            <person name="Lu F."/>
            <person name="Nusskern D.R."/>
            <person name="Shue B.C."/>
            <person name="Zheng X.H."/>
            <person name="Zhong F."/>
            <person name="Delcher A.L."/>
            <person name="Huson D.H."/>
            <person name="Kravitz S.A."/>
            <person name="Mouchard L."/>
            <person name="Reinert K."/>
            <person name="Remington K.A."/>
            <person name="Clark A.G."/>
            <person name="Waterman M.S."/>
            <person name="Eichler E.E."/>
            <person name="Adams M.D."/>
            <person name="Hunkapiller M.W."/>
            <person name="Myers E.W."/>
            <person name="Venter J.C."/>
        </authorList>
    </citation>
    <scope>NUCLEOTIDE SEQUENCE [LARGE SCALE GENOMIC DNA]</scope>
</reference>
<reference key="4">
    <citation type="journal article" date="2004" name="Genome Res.">
        <title>The status, quality, and expansion of the NIH full-length cDNA project: the Mammalian Gene Collection (MGC).</title>
        <authorList>
            <consortium name="The MGC Project Team"/>
        </authorList>
    </citation>
    <scope>NUCLEOTIDE SEQUENCE [LARGE SCALE MRNA] (ISOFORM 1)</scope>
    <source>
        <tissue>Placenta</tissue>
    </source>
</reference>
<reference key="5">
    <citation type="journal article" date="2007" name="BMC Genomics">
        <title>The full-ORF clone resource of the German cDNA consortium.</title>
        <authorList>
            <person name="Bechtel S."/>
            <person name="Rosenfelder H."/>
            <person name="Duda A."/>
            <person name="Schmidt C.P."/>
            <person name="Ernst U."/>
            <person name="Wellenreuther R."/>
            <person name="Mehrle A."/>
            <person name="Schuster C."/>
            <person name="Bahr A."/>
            <person name="Bloecker H."/>
            <person name="Heubner D."/>
            <person name="Hoerlein A."/>
            <person name="Michel G."/>
            <person name="Wedler H."/>
            <person name="Koehrer K."/>
            <person name="Ottenwaelder B."/>
            <person name="Poustka A."/>
            <person name="Wiemann S."/>
            <person name="Schupp I."/>
        </authorList>
    </citation>
    <scope>NUCLEOTIDE SEQUENCE [LARGE SCALE MRNA] OF 101-388 (ISOFORM 1)</scope>
    <source>
        <tissue>Lymph node</tissue>
    </source>
</reference>
<reference key="6">
    <citation type="journal article" date="2006" name="Biochim. Biophys. Acta">
        <title>Intracellular localization and tissue-specific distribution of human and yeast DHHC cysteine-rich domain-containing proteins.</title>
        <authorList>
            <person name="Ohno Y."/>
            <person name="Kihara A."/>
            <person name="Sano T."/>
            <person name="Igarashi Y."/>
        </authorList>
    </citation>
    <scope>SUBCELLULAR LOCATION</scope>
    <scope>TISSUE SPECIFICITY</scope>
</reference>
<reference key="7">
    <citation type="journal article" date="2012" name="Mol. Biol. Cell">
        <title>Analysis of substrate specificity of human DHHC protein acyltransferases using a yeast expression system.</title>
        <authorList>
            <person name="Ohno Y."/>
            <person name="Kashio A."/>
            <person name="Ogata R."/>
            <person name="Ishitomi A."/>
            <person name="Yamazaki Y."/>
            <person name="Kihara A."/>
        </authorList>
    </citation>
    <scope>FUNCTION</scope>
    <scope>CATALYTIC ACTIVITY</scope>
</reference>
<reference key="8">
    <citation type="journal article" date="2013" name="J. Proteome Res.">
        <title>Toward a comprehensive characterization of a human cancer cell phosphoproteome.</title>
        <authorList>
            <person name="Zhou H."/>
            <person name="Di Palma S."/>
            <person name="Preisinger C."/>
            <person name="Peng M."/>
            <person name="Polat A.N."/>
            <person name="Heck A.J."/>
            <person name="Mohammed S."/>
        </authorList>
    </citation>
    <scope>PHOSPHORYLATION [LARGE SCALE ANALYSIS] AT SER-19</scope>
    <scope>IDENTIFICATION BY MASS SPECTROMETRY [LARGE SCALE ANALYSIS]</scope>
    <source>
        <tissue>Erythroleukemia</tissue>
    </source>
</reference>
<reference key="9">
    <citation type="journal article" date="2016" name="J. Biol. Chem.">
        <title>S-Palmitoylation of a Novel Site in the beta2-Adrenergic Receptor Associated with a Novel Intracellular Itinerary.</title>
        <authorList>
            <person name="Adachi N."/>
            <person name="Hess D.T."/>
            <person name="McLaughlin P."/>
            <person name="Stamler J.S."/>
        </authorList>
    </citation>
    <scope>FUNCTION</scope>
    <scope>CATALYTIC ACTIVITY</scope>
</reference>
<reference key="10">
    <citation type="journal article" date="2022" name="EMBO J.">
        <title>ZDHHC18 negatively regulates cGAS-mediated innate immunity through palmitoylation.</title>
        <authorList>
            <person name="Shi C."/>
            <person name="Yang X."/>
            <person name="Liu Y."/>
            <person name="Li H."/>
            <person name="Chu H."/>
            <person name="Li G."/>
            <person name="Yin H."/>
        </authorList>
    </citation>
    <scope>FUNCTION</scope>
    <scope>CATALYTIC ACTIVITY</scope>
    <scope>SUBCELLULAR LOCATION</scope>
</reference>